<name>PGK_COXBU</name>
<comment type="catalytic activity">
    <reaction evidence="1">
        <text>(2R)-3-phosphoglycerate + ATP = (2R)-3-phospho-glyceroyl phosphate + ADP</text>
        <dbReference type="Rhea" id="RHEA:14801"/>
        <dbReference type="ChEBI" id="CHEBI:30616"/>
        <dbReference type="ChEBI" id="CHEBI:57604"/>
        <dbReference type="ChEBI" id="CHEBI:58272"/>
        <dbReference type="ChEBI" id="CHEBI:456216"/>
        <dbReference type="EC" id="2.7.2.3"/>
    </reaction>
</comment>
<comment type="pathway">
    <text evidence="1">Carbohydrate degradation; glycolysis; pyruvate from D-glyceraldehyde 3-phosphate: step 2/5.</text>
</comment>
<comment type="subunit">
    <text evidence="1">Monomer.</text>
</comment>
<comment type="subcellular location">
    <subcellularLocation>
        <location evidence="1">Cytoplasm</location>
    </subcellularLocation>
</comment>
<comment type="similarity">
    <text evidence="1">Belongs to the phosphoglycerate kinase family.</text>
</comment>
<comment type="sequence caution" evidence="2">
    <conflict type="erroneous initiation">
        <sequence resource="EMBL-CDS" id="AAO91276"/>
    </conflict>
</comment>
<reference key="1">
    <citation type="journal article" date="2003" name="Proc. Natl. Acad. Sci. U.S.A.">
        <title>Complete genome sequence of the Q-fever pathogen, Coxiella burnetii.</title>
        <authorList>
            <person name="Seshadri R."/>
            <person name="Paulsen I.T."/>
            <person name="Eisen J.A."/>
            <person name="Read T.D."/>
            <person name="Nelson K.E."/>
            <person name="Nelson W.C."/>
            <person name="Ward N.L."/>
            <person name="Tettelin H."/>
            <person name="Davidsen T.M."/>
            <person name="Beanan M.J."/>
            <person name="DeBoy R.T."/>
            <person name="Daugherty S.C."/>
            <person name="Brinkac L.M."/>
            <person name="Madupu R."/>
            <person name="Dodson R.J."/>
            <person name="Khouri H.M."/>
            <person name="Lee K.H."/>
            <person name="Carty H.A."/>
            <person name="Scanlan D."/>
            <person name="Heinzen R.A."/>
            <person name="Thompson H.A."/>
            <person name="Samuel J.E."/>
            <person name="Fraser C.M."/>
            <person name="Heidelberg J.F."/>
        </authorList>
    </citation>
    <scope>NUCLEOTIDE SEQUENCE [LARGE SCALE GENOMIC DNA]</scope>
    <source>
        <strain>RSA 493 / Nine Mile phase I</strain>
    </source>
</reference>
<protein>
    <recommendedName>
        <fullName evidence="1">Phosphoglycerate kinase</fullName>
        <ecNumber evidence="1">2.7.2.3</ecNumber>
    </recommendedName>
</protein>
<keyword id="KW-0002">3D-structure</keyword>
<keyword id="KW-0067">ATP-binding</keyword>
<keyword id="KW-0963">Cytoplasm</keyword>
<keyword id="KW-0324">Glycolysis</keyword>
<keyword id="KW-0418">Kinase</keyword>
<keyword id="KW-0547">Nucleotide-binding</keyword>
<keyword id="KW-1185">Reference proteome</keyword>
<keyword id="KW-0808">Transferase</keyword>
<feature type="chain" id="PRO_0000145938" description="Phosphoglycerate kinase">
    <location>
        <begin position="1"/>
        <end position="391"/>
    </location>
</feature>
<feature type="binding site" evidence="1">
    <location>
        <begin position="16"/>
        <end position="18"/>
    </location>
    <ligand>
        <name>substrate</name>
    </ligand>
</feature>
<feature type="binding site" evidence="1">
    <location>
        <position position="31"/>
    </location>
    <ligand>
        <name>substrate</name>
    </ligand>
</feature>
<feature type="binding site" evidence="1">
    <location>
        <begin position="54"/>
        <end position="57"/>
    </location>
    <ligand>
        <name>substrate</name>
    </ligand>
</feature>
<feature type="binding site" evidence="1">
    <location>
        <position position="108"/>
    </location>
    <ligand>
        <name>substrate</name>
    </ligand>
</feature>
<feature type="binding site" evidence="1">
    <location>
        <position position="141"/>
    </location>
    <ligand>
        <name>substrate</name>
    </ligand>
</feature>
<feature type="binding site" evidence="1">
    <location>
        <position position="192"/>
    </location>
    <ligand>
        <name>ATP</name>
        <dbReference type="ChEBI" id="CHEBI:30616"/>
    </ligand>
</feature>
<feature type="binding site" evidence="1">
    <location>
        <position position="314"/>
    </location>
    <ligand>
        <name>ATP</name>
        <dbReference type="ChEBI" id="CHEBI:30616"/>
    </ligand>
</feature>
<feature type="binding site" evidence="1">
    <location>
        <begin position="340"/>
        <end position="343"/>
    </location>
    <ligand>
        <name>ATP</name>
        <dbReference type="ChEBI" id="CHEBI:30616"/>
    </ligand>
</feature>
<feature type="helix" evidence="3">
    <location>
        <begin position="1"/>
        <end position="3"/>
    </location>
</feature>
<feature type="strand" evidence="3">
    <location>
        <begin position="10"/>
        <end position="15"/>
    </location>
</feature>
<feature type="strand" evidence="3">
    <location>
        <begin position="25"/>
        <end position="27"/>
    </location>
</feature>
<feature type="helix" evidence="3">
    <location>
        <begin position="30"/>
        <end position="44"/>
    </location>
</feature>
<feature type="strand" evidence="3">
    <location>
        <begin position="48"/>
        <end position="53"/>
    </location>
</feature>
<feature type="helix" evidence="3">
    <location>
        <begin position="65"/>
        <end position="67"/>
    </location>
</feature>
<feature type="helix" evidence="3">
    <location>
        <begin position="70"/>
        <end position="78"/>
    </location>
</feature>
<feature type="strand" evidence="3">
    <location>
        <begin position="86"/>
        <end position="89"/>
    </location>
</feature>
<feature type="helix" evidence="3">
    <location>
        <begin position="90"/>
        <end position="92"/>
    </location>
</feature>
<feature type="strand" evidence="3">
    <location>
        <begin position="101"/>
        <end position="104"/>
    </location>
</feature>
<feature type="helix" evidence="3">
    <location>
        <begin position="107"/>
        <end position="109"/>
    </location>
</feature>
<feature type="turn" evidence="3">
    <location>
        <begin position="111"/>
        <end position="116"/>
    </location>
</feature>
<feature type="helix" evidence="3">
    <location>
        <begin position="118"/>
        <end position="126"/>
    </location>
</feature>
<feature type="strand" evidence="3">
    <location>
        <begin position="129"/>
        <end position="133"/>
    </location>
</feature>
<feature type="helix" evidence="3">
    <location>
        <begin position="136"/>
        <end position="138"/>
    </location>
</feature>
<feature type="turn" evidence="3">
    <location>
        <begin position="144"/>
        <end position="147"/>
    </location>
</feature>
<feature type="helix" evidence="3">
    <location>
        <begin position="148"/>
        <end position="152"/>
    </location>
</feature>
<feature type="strand" evidence="3">
    <location>
        <begin position="154"/>
        <end position="158"/>
    </location>
</feature>
<feature type="helix" evidence="3">
    <location>
        <begin position="160"/>
        <end position="174"/>
    </location>
</feature>
<feature type="strand" evidence="3">
    <location>
        <begin position="178"/>
        <end position="187"/>
    </location>
</feature>
<feature type="helix" evidence="3">
    <location>
        <begin position="189"/>
        <end position="191"/>
    </location>
</feature>
<feature type="helix" evidence="3">
    <location>
        <begin position="193"/>
        <end position="200"/>
    </location>
</feature>
<feature type="strand" evidence="3">
    <location>
        <begin position="204"/>
        <end position="210"/>
    </location>
</feature>
<feature type="helix" evidence="3">
    <location>
        <begin position="211"/>
        <end position="219"/>
    </location>
</feature>
<feature type="helix" evidence="3">
    <location>
        <begin position="231"/>
        <end position="233"/>
    </location>
</feature>
<feature type="helix" evidence="3">
    <location>
        <begin position="234"/>
        <end position="247"/>
    </location>
</feature>
<feature type="strand" evidence="3">
    <location>
        <begin position="255"/>
        <end position="262"/>
    </location>
</feature>
<feature type="strand" evidence="3">
    <location>
        <begin position="270"/>
        <end position="273"/>
    </location>
</feature>
<feature type="helix" evidence="3">
    <location>
        <begin position="274"/>
        <end position="276"/>
    </location>
</feature>
<feature type="strand" evidence="3">
    <location>
        <begin position="282"/>
        <end position="286"/>
    </location>
</feature>
<feature type="helix" evidence="3">
    <location>
        <begin position="288"/>
        <end position="300"/>
    </location>
</feature>
<feature type="strand" evidence="3">
    <location>
        <begin position="302"/>
        <end position="308"/>
    </location>
</feature>
<feature type="helix" evidence="3">
    <location>
        <begin position="320"/>
        <end position="331"/>
    </location>
</feature>
<feature type="strand" evidence="3">
    <location>
        <begin position="334"/>
        <end position="338"/>
    </location>
</feature>
<feature type="helix" evidence="3">
    <location>
        <begin position="341"/>
        <end position="349"/>
    </location>
</feature>
<feature type="helix" evidence="3">
    <location>
        <begin position="353"/>
        <end position="355"/>
    </location>
</feature>
<feature type="strand" evidence="3">
    <location>
        <begin position="356"/>
        <end position="359"/>
    </location>
</feature>
<feature type="helix" evidence="3">
    <location>
        <begin position="364"/>
        <end position="371"/>
    </location>
</feature>
<feature type="helix" evidence="3">
    <location>
        <begin position="376"/>
        <end position="385"/>
    </location>
</feature>
<organism>
    <name type="scientific">Coxiella burnetii (strain RSA 493 / Nine Mile phase I)</name>
    <dbReference type="NCBI Taxonomy" id="227377"/>
    <lineage>
        <taxon>Bacteria</taxon>
        <taxon>Pseudomonadati</taxon>
        <taxon>Pseudomonadota</taxon>
        <taxon>Gammaproteobacteria</taxon>
        <taxon>Legionellales</taxon>
        <taxon>Coxiellaceae</taxon>
        <taxon>Coxiella</taxon>
    </lineage>
</organism>
<dbReference type="EC" id="2.7.2.3" evidence="1"/>
<dbReference type="EMBL" id="AE016828">
    <property type="protein sequence ID" value="AAO91276.2"/>
    <property type="status" value="ALT_INIT"/>
    <property type="molecule type" value="Genomic_DNA"/>
</dbReference>
<dbReference type="RefSeq" id="NP_820762.2">
    <property type="nucleotide sequence ID" value="NC_002971.3"/>
</dbReference>
<dbReference type="PDB" id="4NG4">
    <property type="method" value="X-ray"/>
    <property type="resolution" value="2.78 A"/>
    <property type="chains" value="A/B/C=1-388"/>
</dbReference>
<dbReference type="PDBsum" id="4NG4"/>
<dbReference type="SMR" id="Q83AU6"/>
<dbReference type="STRING" id="227377.CBU_1782"/>
<dbReference type="DNASU" id="1209693"/>
<dbReference type="EnsemblBacteria" id="AAO91276">
    <property type="protein sequence ID" value="AAO91276"/>
    <property type="gene ID" value="CBU_1782"/>
</dbReference>
<dbReference type="GeneID" id="1209693"/>
<dbReference type="KEGG" id="cbu:CBU_1782"/>
<dbReference type="PATRIC" id="fig|227377.7.peg.1769"/>
<dbReference type="eggNOG" id="COG0126">
    <property type="taxonomic scope" value="Bacteria"/>
</dbReference>
<dbReference type="HOGENOM" id="CLU_025427_0_2_6"/>
<dbReference type="OrthoDB" id="9808460at2"/>
<dbReference type="UniPathway" id="UPA00109">
    <property type="reaction ID" value="UER00185"/>
</dbReference>
<dbReference type="EvolutionaryTrace" id="Q83AU6"/>
<dbReference type="Proteomes" id="UP000002671">
    <property type="component" value="Chromosome"/>
</dbReference>
<dbReference type="GO" id="GO:0005829">
    <property type="term" value="C:cytosol"/>
    <property type="evidence" value="ECO:0000318"/>
    <property type="project" value="GO_Central"/>
</dbReference>
<dbReference type="GO" id="GO:0043531">
    <property type="term" value="F:ADP binding"/>
    <property type="evidence" value="ECO:0000318"/>
    <property type="project" value="GO_Central"/>
</dbReference>
<dbReference type="GO" id="GO:0005524">
    <property type="term" value="F:ATP binding"/>
    <property type="evidence" value="ECO:0000318"/>
    <property type="project" value="GO_Central"/>
</dbReference>
<dbReference type="GO" id="GO:0004618">
    <property type="term" value="F:phosphoglycerate kinase activity"/>
    <property type="evidence" value="ECO:0000318"/>
    <property type="project" value="GO_Central"/>
</dbReference>
<dbReference type="GO" id="GO:0006094">
    <property type="term" value="P:gluconeogenesis"/>
    <property type="evidence" value="ECO:0000318"/>
    <property type="project" value="GO_Central"/>
</dbReference>
<dbReference type="GO" id="GO:0006096">
    <property type="term" value="P:glycolytic process"/>
    <property type="evidence" value="ECO:0000318"/>
    <property type="project" value="GO_Central"/>
</dbReference>
<dbReference type="FunFam" id="3.40.50.1260:FF:000001">
    <property type="entry name" value="Phosphoglycerate kinase"/>
    <property type="match status" value="1"/>
</dbReference>
<dbReference type="FunFam" id="3.40.50.1260:FF:000002">
    <property type="entry name" value="Phosphoglycerate kinase"/>
    <property type="match status" value="1"/>
</dbReference>
<dbReference type="Gene3D" id="3.40.50.1260">
    <property type="entry name" value="Phosphoglycerate kinase, N-terminal domain"/>
    <property type="match status" value="2"/>
</dbReference>
<dbReference type="HAMAP" id="MF_00145">
    <property type="entry name" value="Phosphoglyc_kinase"/>
    <property type="match status" value="1"/>
</dbReference>
<dbReference type="InterPro" id="IPR001576">
    <property type="entry name" value="Phosphoglycerate_kinase"/>
</dbReference>
<dbReference type="InterPro" id="IPR015911">
    <property type="entry name" value="Phosphoglycerate_kinase_CS"/>
</dbReference>
<dbReference type="InterPro" id="IPR015824">
    <property type="entry name" value="Phosphoglycerate_kinase_N"/>
</dbReference>
<dbReference type="InterPro" id="IPR036043">
    <property type="entry name" value="Phosphoglycerate_kinase_sf"/>
</dbReference>
<dbReference type="PANTHER" id="PTHR11406">
    <property type="entry name" value="PHOSPHOGLYCERATE KINASE"/>
    <property type="match status" value="1"/>
</dbReference>
<dbReference type="PANTHER" id="PTHR11406:SF23">
    <property type="entry name" value="PHOSPHOGLYCERATE KINASE 1, CHLOROPLASTIC-RELATED"/>
    <property type="match status" value="1"/>
</dbReference>
<dbReference type="Pfam" id="PF00162">
    <property type="entry name" value="PGK"/>
    <property type="match status" value="1"/>
</dbReference>
<dbReference type="PIRSF" id="PIRSF000724">
    <property type="entry name" value="Pgk"/>
    <property type="match status" value="1"/>
</dbReference>
<dbReference type="PRINTS" id="PR00477">
    <property type="entry name" value="PHGLYCKINASE"/>
</dbReference>
<dbReference type="SUPFAM" id="SSF53748">
    <property type="entry name" value="Phosphoglycerate kinase"/>
    <property type="match status" value="1"/>
</dbReference>
<dbReference type="PROSITE" id="PS00111">
    <property type="entry name" value="PGLYCERATE_KINASE"/>
    <property type="match status" value="1"/>
</dbReference>
<proteinExistence type="evidence at protein level"/>
<accession>Q83AU6</accession>
<evidence type="ECO:0000255" key="1">
    <source>
        <dbReference type="HAMAP-Rule" id="MF_00145"/>
    </source>
</evidence>
<evidence type="ECO:0000305" key="2"/>
<evidence type="ECO:0007829" key="3">
    <source>
        <dbReference type="PDB" id="4NG4"/>
    </source>
</evidence>
<gene>
    <name evidence="1" type="primary">pgk</name>
    <name type="ordered locus">CBU_1782</name>
</gene>
<sequence>MSNLNLHNKRVMIREDLNVPMKNGKITNDERIVRALPTIQKAIEQKARVMILSHLGRPEEGKFEKEFSLAPVARLLSKKLNQKVPLINDWLKGVAVEPGQAILCENVRFNKGENENNTELAKRMAELCDIFVMDAFATAHRAQASTAGVAAYAKLACAGPLLISEVEALSRALENPQKPLVAVVGGSKVSTKIHLLENLLDKVDQLIVGGGIANTFLKAQGYSIGKSLCENEWLDAAQQFWEKAAEKNVSLPLPVDVIVADELSEDAKATVKNIDAVTSNESIFDVGPNTSATYAKLMAQAGTIVWNGPIGVFEIEAFSQGTRALAQAVAKSTAYSIVGGGDTLAALDKFNLTDQMSYVSTAGGAFLEFLEGKILPAIKILTQRAKEYEQK</sequence>